<dbReference type="EC" id="3.6.4.-" evidence="2"/>
<dbReference type="EMBL" id="KQ965734">
    <property type="protein sequence ID" value="KXS20890.1"/>
    <property type="molecule type" value="Genomic_DNA"/>
</dbReference>
<dbReference type="STRING" id="1344416.A0A139AVY4"/>
<dbReference type="OMA" id="VLSEAMW"/>
<dbReference type="OrthoDB" id="2110130at2759"/>
<dbReference type="UniPathway" id="UPA00345"/>
<dbReference type="Proteomes" id="UP000070544">
    <property type="component" value="Unassembled WGS sequence"/>
</dbReference>
<dbReference type="GO" id="GO:0005829">
    <property type="term" value="C:cytosol"/>
    <property type="evidence" value="ECO:0007669"/>
    <property type="project" value="UniProtKB-SubCell"/>
</dbReference>
<dbReference type="GO" id="GO:0005524">
    <property type="term" value="F:ATP binding"/>
    <property type="evidence" value="ECO:0007669"/>
    <property type="project" value="UniProtKB-KW"/>
</dbReference>
<dbReference type="GO" id="GO:0016887">
    <property type="term" value="F:ATP hydrolysis activity"/>
    <property type="evidence" value="ECO:0007669"/>
    <property type="project" value="InterPro"/>
</dbReference>
<dbReference type="GO" id="GO:0003723">
    <property type="term" value="F:RNA binding"/>
    <property type="evidence" value="ECO:0007669"/>
    <property type="project" value="UniProtKB-KW"/>
</dbReference>
<dbReference type="GO" id="GO:0003746">
    <property type="term" value="F:translation elongation factor activity"/>
    <property type="evidence" value="ECO:0000316"/>
    <property type="project" value="UniProtKB"/>
</dbReference>
<dbReference type="GO" id="GO:0002182">
    <property type="term" value="P:cytoplasmic translational elongation"/>
    <property type="evidence" value="ECO:0000316"/>
    <property type="project" value="UniProtKB"/>
</dbReference>
<dbReference type="GO" id="GO:0009889">
    <property type="term" value="P:regulation of biosynthetic process"/>
    <property type="evidence" value="ECO:0007669"/>
    <property type="project" value="UniProtKB-ARBA"/>
</dbReference>
<dbReference type="CDD" id="cd03221">
    <property type="entry name" value="ABCF_EF-3"/>
    <property type="match status" value="1"/>
</dbReference>
<dbReference type="CDD" id="cd18626">
    <property type="entry name" value="CD_eEF3"/>
    <property type="match status" value="1"/>
</dbReference>
<dbReference type="FunFam" id="1.25.10.10:FF:000076">
    <property type="entry name" value="Elongation factor 3"/>
    <property type="match status" value="1"/>
</dbReference>
<dbReference type="FunFam" id="2.40.50.990:FF:000002">
    <property type="entry name" value="mRNA export factor elf1"/>
    <property type="match status" value="1"/>
</dbReference>
<dbReference type="FunFam" id="3.40.50.300:FF:000193">
    <property type="entry name" value="Probable Elongation factor 3"/>
    <property type="match status" value="1"/>
</dbReference>
<dbReference type="Gene3D" id="2.40.50.990">
    <property type="match status" value="1"/>
</dbReference>
<dbReference type="Gene3D" id="1.25.10.10">
    <property type="entry name" value="Leucine-rich Repeat Variant"/>
    <property type="match status" value="1"/>
</dbReference>
<dbReference type="Gene3D" id="3.40.50.300">
    <property type="entry name" value="P-loop containing nucleotide triphosphate hydrolases"/>
    <property type="match status" value="2"/>
</dbReference>
<dbReference type="InterPro" id="IPR003593">
    <property type="entry name" value="AAA+_ATPase"/>
</dbReference>
<dbReference type="InterPro" id="IPR003439">
    <property type="entry name" value="ABC_transporter-like_ATP-bd"/>
</dbReference>
<dbReference type="InterPro" id="IPR017871">
    <property type="entry name" value="ABC_transporter-like_CS"/>
</dbReference>
<dbReference type="InterPro" id="IPR050611">
    <property type="entry name" value="ABCF_EF3_subfamily"/>
</dbReference>
<dbReference type="InterPro" id="IPR011989">
    <property type="entry name" value="ARM-like"/>
</dbReference>
<dbReference type="InterPro" id="IPR016024">
    <property type="entry name" value="ARM-type_fold"/>
</dbReference>
<dbReference type="InterPro" id="IPR016197">
    <property type="entry name" value="Chromo-like_dom_sf"/>
</dbReference>
<dbReference type="InterPro" id="IPR000953">
    <property type="entry name" value="Chromo/chromo_shadow_dom"/>
</dbReference>
<dbReference type="InterPro" id="IPR015688">
    <property type="entry name" value="eEF3_ABC2_chromodomain-like"/>
</dbReference>
<dbReference type="InterPro" id="IPR047038">
    <property type="entry name" value="eEF3_chromodomain-like_sf"/>
</dbReference>
<dbReference type="InterPro" id="IPR021133">
    <property type="entry name" value="HEAT_type_2"/>
</dbReference>
<dbReference type="InterPro" id="IPR027417">
    <property type="entry name" value="P-loop_NTPase"/>
</dbReference>
<dbReference type="InterPro" id="IPR034085">
    <property type="entry name" value="TOG"/>
</dbReference>
<dbReference type="PANTHER" id="PTHR19211">
    <property type="entry name" value="ATP-BINDING TRANSPORT PROTEIN-RELATED"/>
    <property type="match status" value="1"/>
</dbReference>
<dbReference type="PANTHER" id="PTHR19211:SF5">
    <property type="entry name" value="ELONGATION FACTOR 3A-RELATED"/>
    <property type="match status" value="1"/>
</dbReference>
<dbReference type="Pfam" id="PF00005">
    <property type="entry name" value="ABC_tran"/>
    <property type="match status" value="3"/>
</dbReference>
<dbReference type="Pfam" id="PF24984">
    <property type="entry name" value="HEAT_EF3_GNC1"/>
    <property type="match status" value="1"/>
</dbReference>
<dbReference type="Pfam" id="PF24987">
    <property type="entry name" value="HEAT_EF3_N"/>
    <property type="match status" value="1"/>
</dbReference>
<dbReference type="SMART" id="SM00382">
    <property type="entry name" value="AAA"/>
    <property type="match status" value="2"/>
</dbReference>
<dbReference type="SMART" id="SM00298">
    <property type="entry name" value="CHROMO"/>
    <property type="match status" value="1"/>
</dbReference>
<dbReference type="SMART" id="SM01349">
    <property type="entry name" value="TOG"/>
    <property type="match status" value="1"/>
</dbReference>
<dbReference type="SUPFAM" id="SSF48371">
    <property type="entry name" value="ARM repeat"/>
    <property type="match status" value="1"/>
</dbReference>
<dbReference type="SUPFAM" id="SSF54160">
    <property type="entry name" value="Chromo domain-like"/>
    <property type="match status" value="1"/>
</dbReference>
<dbReference type="SUPFAM" id="SSF52540">
    <property type="entry name" value="P-loop containing nucleoside triphosphate hydrolases"/>
    <property type="match status" value="2"/>
</dbReference>
<dbReference type="PROSITE" id="PS00211">
    <property type="entry name" value="ABC_TRANSPORTER_1"/>
    <property type="match status" value="2"/>
</dbReference>
<dbReference type="PROSITE" id="PS50893">
    <property type="entry name" value="ABC_TRANSPORTER_2"/>
    <property type="match status" value="2"/>
</dbReference>
<dbReference type="PROSITE" id="PS50077">
    <property type="entry name" value="HEAT_REPEAT"/>
    <property type="match status" value="1"/>
</dbReference>
<proteinExistence type="inferred from homology"/>
<keyword id="KW-0067">ATP-binding</keyword>
<keyword id="KW-0963">Cytoplasm</keyword>
<keyword id="KW-0251">Elongation factor</keyword>
<keyword id="KW-0378">Hydrolase</keyword>
<keyword id="KW-0547">Nucleotide-binding</keyword>
<keyword id="KW-0648">Protein biosynthesis</keyword>
<keyword id="KW-1185">Reference proteome</keyword>
<keyword id="KW-0677">Repeat</keyword>
<keyword id="KW-0694">RNA-binding</keyword>
<name>EF3_GONPJ</name>
<sequence length="1092" mass="120186">MPPKKSNARNASLLKEAVTNAGRSDTASTAREGSIAATFVSDSDSSTTASGPVDEKVAAVAELITTLTTNAASDKRQSAADDIAKFVEAEGVAQMVKTKILHGIATGLHNTKQPVAREGAITAIETLIKSPVSKQIEPYMITFIPVLLERLSDKAKTVCLAADSALKALITRLTPYATKQVLPLLLAGIEYSQKWQTKVGALELMQSLSKTAPRQMTTAVPDLVPPLSEVMHDTKAEAKNAGRQTMEAICELINNKDIEKFIPALIDTIANPEKVPDTVHLLGATTFVSEVLPPTLAIMVPLLSRGLNERQTAIKRKAAVIIINMCKLVEKPQIIAPFLPRLLPTLEKIQDDVADPECRQVCQNATKILTKVGIPAPGTVMDDSYEFKKLDDKALAYLKKAIGHQQITEIPEAYRPVLEYLEHIAAAMVADGNMDNDDWNGSIIPTLKAFIPTEGTVTNAVKEFRELSFGSNVKEAVAEEEEDDAEELCNCEFSLAYGARVLLNRTHLILKRGHRYGLTGANGSGKSTLMRAIANGQVEGFPPADQLKTVAVEHDLDGAHEHDNKEVQAFVLEDPVYAHLPKETVVNMLESVGFKGPMATRPVGQLSGGWRMKLALARAMLHNADILLLDEPTNHLDVINVAWLQDYLIGLKTVTSIIVSHDSSFLDIVCSDIIHLDNFKLKRYRGNLSKFVEAVPEAKAYYELGAAQQTFRFPEPGMLEGVKTKERAILKVQNAVFQYPGTDRRQLNGVTFQCSLGSRVAVVGPNGAGKSTLIKLLCGVIEPDNGVVWRHPNLRIAYVAQHAFEHIEKHTNLTPNQYIQWRYQTGEDREEMEKAARQISAEEEAAMKKVQVISGEKKVVDSVIGRRKLKNSYEYEVSWVGKLSNENSWLPRDTLIEMGFLKKVQEIDQAEAARQGLARPLTQKEIEKHLSDVGIDSEIGTHSHIRGLSGGQKVKVVIAGAMWQRPHLLVLDEPTNFLDRDSLGALKTAIDAYGGGVIMVTHSREFSEAICKEVWKVDNGELTPTGHNWVSGQGSGPRLEDKNKDEEVFDAFGNKIDVAKQKSKLSGKDLRKKRKEREARRKRGEEVSDDDE</sequence>
<feature type="chain" id="PRO_0000461809" description="Elongation factor 3">
    <location>
        <begin position="1"/>
        <end position="1092"/>
    </location>
</feature>
<feature type="repeat" description="HEAT 1" evidence="3">
    <location>
        <begin position="95"/>
        <end position="133"/>
    </location>
</feature>
<feature type="repeat" description="HEAT 2" evidence="3">
    <location>
        <begin position="138"/>
        <end position="175"/>
    </location>
</feature>
<feature type="repeat" description="HEAT 3" evidence="3">
    <location>
        <begin position="177"/>
        <end position="214"/>
    </location>
</feature>
<feature type="repeat" description="HEAT 4" evidence="3">
    <location>
        <begin position="218"/>
        <end position="255"/>
    </location>
</feature>
<feature type="repeat" description="HEAT 5" evidence="3">
    <location>
        <begin position="257"/>
        <end position="293"/>
    </location>
</feature>
<feature type="repeat" description="HEAT 6" evidence="3">
    <location>
        <begin position="294"/>
        <end position="331"/>
    </location>
</feature>
<feature type="repeat" description="HEAT 7" evidence="3">
    <location>
        <begin position="333"/>
        <end position="370"/>
    </location>
</feature>
<feature type="domain" description="ABC transporter 1" evidence="4">
    <location>
        <begin position="486"/>
        <end position="704"/>
    </location>
</feature>
<feature type="domain" description="ABC transporter 2" evidence="4">
    <location>
        <begin position="730"/>
        <end position="1044"/>
    </location>
</feature>
<feature type="region of interest" description="Disordered" evidence="5">
    <location>
        <begin position="1023"/>
        <end position="1044"/>
    </location>
</feature>
<feature type="region of interest" description="Disordered" evidence="5">
    <location>
        <begin position="1063"/>
        <end position="1092"/>
    </location>
</feature>
<feature type="compositionally biased region" description="Basic residues" evidence="5">
    <location>
        <begin position="1063"/>
        <end position="1075"/>
    </location>
</feature>
<feature type="compositionally biased region" description="Basic and acidic residues" evidence="5">
    <location>
        <begin position="1076"/>
        <end position="1086"/>
    </location>
</feature>
<feature type="binding site" evidence="2">
    <location>
        <position position="92"/>
    </location>
    <ligand>
        <name>ADP</name>
        <dbReference type="ChEBI" id="CHEBI:456216"/>
    </ligand>
</feature>
<feature type="binding site" evidence="2">
    <location>
        <position position="454"/>
    </location>
    <ligand>
        <name>ADP</name>
        <dbReference type="ChEBI" id="CHEBI:456216"/>
    </ligand>
</feature>
<feature type="binding site" evidence="2">
    <location>
        <position position="766"/>
    </location>
    <ligand>
        <name>ADP</name>
        <dbReference type="ChEBI" id="CHEBI:456216"/>
    </ligand>
</feature>
<feature type="binding site" evidence="2">
    <location>
        <position position="973"/>
    </location>
    <ligand>
        <name>ADP</name>
        <dbReference type="ChEBI" id="CHEBI:456216"/>
    </ligand>
</feature>
<feature type="binding site" evidence="2">
    <location>
        <position position="976"/>
    </location>
    <ligand>
        <name>ADP</name>
        <dbReference type="ChEBI" id="CHEBI:456216"/>
    </ligand>
</feature>
<feature type="binding site" evidence="2">
    <location>
        <position position="1002"/>
    </location>
    <ligand>
        <name>ADP</name>
        <dbReference type="ChEBI" id="CHEBI:456216"/>
    </ligand>
</feature>
<reference evidence="9" key="1">
    <citation type="journal article" date="2015" name="Genome Biol. Evol.">
        <title>Phylogenomic analyses indicate that early fungi evolved digesting cell walls of algal ancestors of land plants.</title>
        <authorList>
            <person name="Chang Y."/>
            <person name="Wang S."/>
            <person name="Sekimoto S."/>
            <person name="Aerts A.L."/>
            <person name="Choi C."/>
            <person name="Clum A."/>
            <person name="LaButti K.M."/>
            <person name="Lindquist E.A."/>
            <person name="Yee Ngan C."/>
            <person name="Ohm R.A."/>
            <person name="Salamov A.A."/>
            <person name="Grigoriev I.V."/>
            <person name="Spatafora J.W."/>
            <person name="Berbee M.L."/>
        </authorList>
    </citation>
    <scope>NUCLEOTIDE SEQUENCE [LARGE SCALE GENOMIC DNA]</scope>
    <source>
        <strain>JEL478</strain>
    </source>
</reference>
<reference evidence="7" key="2">
    <citation type="journal article" date="2024" name="Front. Microbiol.">
        <title>The gene YEF3 function encoding translation elongation factor eEF3 is partially conserved across fungi.</title>
        <authorList>
            <person name="Maldonado G."/>
            <person name="Garcia A."/>
            <person name="Herrero S."/>
            <person name="Castano I."/>
            <person name="Altmann M."/>
            <person name="Fischer R."/>
            <person name="Hernandez G."/>
        </authorList>
    </citation>
    <scope>FUNCTION</scope>
</reference>
<accession>A0A139AVY4</accession>
<gene>
    <name evidence="7" type="primary">TEF3</name>
    <name evidence="8" type="ORF">M427DRAFT_119444</name>
</gene>
<organism evidence="9">
    <name type="scientific">Gonapodya prolifera (strain JEL478)</name>
    <name type="common">Monoblepharis prolifera</name>
    <dbReference type="NCBI Taxonomy" id="1344416"/>
    <lineage>
        <taxon>Eukaryota</taxon>
        <taxon>Fungi</taxon>
        <taxon>Fungi incertae sedis</taxon>
        <taxon>Chytridiomycota</taxon>
        <taxon>Chytridiomycota incertae sedis</taxon>
        <taxon>Monoblepharidomycetes</taxon>
        <taxon>Monoblepharidales</taxon>
        <taxon>Gonapodyaceae</taxon>
        <taxon>Gonapodya</taxon>
    </lineage>
</organism>
<protein>
    <recommendedName>
        <fullName evidence="7">Elongation factor 3</fullName>
        <shortName evidence="7">EF-3</shortName>
        <ecNumber evidence="2">3.6.4.-</ecNumber>
    </recommendedName>
    <alternativeName>
        <fullName evidence="7">Eukaryotic elongation factor 3</fullName>
        <shortName evidence="7">eEF3</shortName>
    </alternativeName>
</protein>
<comment type="function">
    <text evidence="2 6">Ribosome-dependent ATPase that functions in cytoplasmic translation elongation (PubMed:39247690). Required for the ATP-dependent release of deacylated tRNA from the ribosomal E-site during protein biosynthesis (By similarity). Stimulates the eEF1A-dependent binding of aminoacyl-tRNA to the ribosomal A-site, which has reduced affinity for tRNA as long as the E-site is occupied (By similarity). Assists translation termination by stimulating the release of nascent protein from the ribosome by release factors (By similarity).</text>
</comment>
<comment type="catalytic activity">
    <reaction evidence="2">
        <text>ATP + H2O = ADP + phosphate + H(+)</text>
        <dbReference type="Rhea" id="RHEA:13065"/>
        <dbReference type="ChEBI" id="CHEBI:15377"/>
        <dbReference type="ChEBI" id="CHEBI:15378"/>
        <dbReference type="ChEBI" id="CHEBI:30616"/>
        <dbReference type="ChEBI" id="CHEBI:43474"/>
        <dbReference type="ChEBI" id="CHEBI:456216"/>
    </reaction>
</comment>
<comment type="pathway">
    <text evidence="1">Protein biosynthesis; polypeptide chain elongation.</text>
</comment>
<comment type="subcellular location">
    <subcellularLocation>
        <location evidence="2">Cytoplasm</location>
        <location evidence="2">Cytosol</location>
    </subcellularLocation>
</comment>
<comment type="similarity">
    <text evidence="7">Belongs to the ABC transporter superfamily. ABCF family. EF3 subfamily.</text>
</comment>
<evidence type="ECO:0000250" key="1">
    <source>
        <dbReference type="UniProtKB" id="O93796"/>
    </source>
</evidence>
<evidence type="ECO:0000250" key="2">
    <source>
        <dbReference type="UniProtKB" id="P16521"/>
    </source>
</evidence>
<evidence type="ECO:0000255" key="3"/>
<evidence type="ECO:0000255" key="4">
    <source>
        <dbReference type="PROSITE-ProRule" id="PRU00434"/>
    </source>
</evidence>
<evidence type="ECO:0000256" key="5">
    <source>
        <dbReference type="SAM" id="MobiDB-lite"/>
    </source>
</evidence>
<evidence type="ECO:0000269" key="6">
    <source>
    </source>
</evidence>
<evidence type="ECO:0000305" key="7"/>
<evidence type="ECO:0000312" key="8">
    <source>
        <dbReference type="EMBL" id="KXS20890.1"/>
    </source>
</evidence>
<evidence type="ECO:0000312" key="9">
    <source>
        <dbReference type="Proteomes" id="UP000070544"/>
    </source>
</evidence>